<name>COBIJ_MYCBO</name>
<feature type="chain" id="PRO_0000150391" description="Cobalamin biosynthesis protein CobIJ">
    <location>
        <begin position="1"/>
        <end position="508"/>
    </location>
</feature>
<feature type="region of interest" description="Precorrin-2 C20-methyltransferase">
    <location>
        <begin position="1"/>
        <end position="243"/>
    </location>
</feature>
<feature type="region of interest" description="Precorrin-3 methylase">
    <location>
        <begin position="244"/>
        <end position="508"/>
    </location>
</feature>
<feature type="region of interest" description="Disordered" evidence="2">
    <location>
        <begin position="489"/>
        <end position="508"/>
    </location>
</feature>
<accession>P66878</accession>
<accession>A0A1R3Y075</accession>
<accession>Q10677</accession>
<accession>X2BJX9</accession>
<keyword id="KW-0169">Cobalamin biosynthesis</keyword>
<keyword id="KW-0489">Methyltransferase</keyword>
<keyword id="KW-0511">Multifunctional enzyme</keyword>
<keyword id="KW-1185">Reference proteome</keyword>
<keyword id="KW-0949">S-adenosyl-L-methionine</keyword>
<keyword id="KW-0808">Transferase</keyword>
<protein>
    <recommendedName>
        <fullName>Cobalamin biosynthesis protein CobIJ</fullName>
    </recommendedName>
    <domain>
        <recommendedName>
            <fullName>Precorrin-2 C(20)-methyltransferase</fullName>
            <ecNumber>2.1.1.130</ecNumber>
        </recommendedName>
        <alternativeName>
            <fullName>S-adenosyl-L-methionine--precorrin-2 methyltransferase</fullName>
            <shortName>SP2MT</shortName>
        </alternativeName>
    </domain>
    <domain>
        <recommendedName>
            <fullName>Precorrin-3B C17-methyltransferase</fullName>
            <ecNumber>2.1.1.131</ecNumber>
        </recommendedName>
        <alternativeName>
            <fullName>S-adenosyl-L-methionine--precorrin-3B methyltransferase</fullName>
        </alternativeName>
    </domain>
</protein>
<reference key="1">
    <citation type="journal article" date="2003" name="Proc. Natl. Acad. Sci. U.S.A.">
        <title>The complete genome sequence of Mycobacterium bovis.</title>
        <authorList>
            <person name="Garnier T."/>
            <person name="Eiglmeier K."/>
            <person name="Camus J.-C."/>
            <person name="Medina N."/>
            <person name="Mansoor H."/>
            <person name="Pryor M."/>
            <person name="Duthoy S."/>
            <person name="Grondin S."/>
            <person name="Lacroix C."/>
            <person name="Monsempe C."/>
            <person name="Simon S."/>
            <person name="Harris B."/>
            <person name="Atkin R."/>
            <person name="Doggett J."/>
            <person name="Mayes R."/>
            <person name="Keating L."/>
            <person name="Wheeler P.R."/>
            <person name="Parkhill J."/>
            <person name="Barrell B.G."/>
            <person name="Cole S.T."/>
            <person name="Gordon S.V."/>
            <person name="Hewinson R.G."/>
        </authorList>
    </citation>
    <scope>NUCLEOTIDE SEQUENCE [LARGE SCALE GENOMIC DNA]</scope>
    <source>
        <strain>ATCC BAA-935 / AF2122/97</strain>
    </source>
</reference>
<reference key="2">
    <citation type="journal article" date="2017" name="Genome Announc.">
        <title>Updated reference genome sequence and annotation of Mycobacterium bovis AF2122/97.</title>
        <authorList>
            <person name="Malone K.M."/>
            <person name="Farrell D."/>
            <person name="Stuber T.P."/>
            <person name="Schubert O.T."/>
            <person name="Aebersold R."/>
            <person name="Robbe-Austerman S."/>
            <person name="Gordon S.V."/>
        </authorList>
    </citation>
    <scope>NUCLEOTIDE SEQUENCE [LARGE SCALE GENOMIC DNA]</scope>
    <scope>GENOME REANNOTATION</scope>
    <source>
        <strain>ATCC BAA-935 / AF2122/97</strain>
    </source>
</reference>
<comment type="function">
    <text evidence="1">Methylates precorrin-2 at the C-20 position to produce precorrin-3A.</text>
</comment>
<comment type="catalytic activity">
    <reaction>
        <text>precorrin-2 + S-adenosyl-L-methionine = precorrin-3A + S-adenosyl-L-homocysteine + H(+)</text>
        <dbReference type="Rhea" id="RHEA:16841"/>
        <dbReference type="ChEBI" id="CHEBI:15378"/>
        <dbReference type="ChEBI" id="CHEBI:57856"/>
        <dbReference type="ChEBI" id="CHEBI:58561"/>
        <dbReference type="ChEBI" id="CHEBI:58827"/>
        <dbReference type="ChEBI" id="CHEBI:59789"/>
        <dbReference type="EC" id="2.1.1.130"/>
    </reaction>
</comment>
<comment type="catalytic activity">
    <reaction>
        <text>precorrin-3B + S-adenosyl-L-methionine = precorrin-4 + S-adenosyl-L-homocysteine + 3 H(+)</text>
        <dbReference type="Rhea" id="RHEA:12761"/>
        <dbReference type="ChEBI" id="CHEBI:15378"/>
        <dbReference type="ChEBI" id="CHEBI:57769"/>
        <dbReference type="ChEBI" id="CHEBI:57856"/>
        <dbReference type="ChEBI" id="CHEBI:59789"/>
        <dbReference type="ChEBI" id="CHEBI:77870"/>
        <dbReference type="EC" id="2.1.1.131"/>
    </reaction>
</comment>
<comment type="pathway">
    <text>Cofactor biosynthesis; adenosylcobalamin biosynthesis; cob(II)yrinate a,c-diamide from precorrin-2 (aerobic route): step 1/10.</text>
</comment>
<comment type="pathway">
    <text>Cofactor biosynthesis; adenosylcobalamin biosynthesis; cob(II)yrinate a,c-diamide from precorrin-2 (aerobic route): step 3/10.</text>
</comment>
<comment type="similarity">
    <text evidence="3">Belongs to the precorrin methyltransferase family.</text>
</comment>
<gene>
    <name type="primary">cobIJ</name>
    <name type="synonym">cobI</name>
    <name type="ordered locus">BQ2027_MB2092</name>
</gene>
<dbReference type="EC" id="2.1.1.130"/>
<dbReference type="EC" id="2.1.1.131"/>
<dbReference type="EMBL" id="LT708304">
    <property type="protein sequence ID" value="SIU00699.1"/>
    <property type="molecule type" value="Genomic_DNA"/>
</dbReference>
<dbReference type="RefSeq" id="NP_855742.1">
    <property type="nucleotide sequence ID" value="NC_002945.3"/>
</dbReference>
<dbReference type="RefSeq" id="WP_003410659.1">
    <property type="nucleotide sequence ID" value="NC_002945.4"/>
</dbReference>
<dbReference type="SMR" id="P66878"/>
<dbReference type="KEGG" id="mbo:BQ2027_MB2092"/>
<dbReference type="PATRIC" id="fig|233413.5.peg.2300"/>
<dbReference type="UniPathway" id="UPA00148">
    <property type="reaction ID" value="UER00212"/>
</dbReference>
<dbReference type="UniPathway" id="UPA00148">
    <property type="reaction ID" value="UER00214"/>
</dbReference>
<dbReference type="Proteomes" id="UP000001419">
    <property type="component" value="Chromosome"/>
</dbReference>
<dbReference type="GO" id="GO:0030788">
    <property type="term" value="F:precorrin-2 C20-methyltransferase activity"/>
    <property type="evidence" value="ECO:0007669"/>
    <property type="project" value="UniProtKB-EC"/>
</dbReference>
<dbReference type="GO" id="GO:0030789">
    <property type="term" value="F:precorrin-3B C17-methyltransferase activity"/>
    <property type="evidence" value="ECO:0007669"/>
    <property type="project" value="UniProtKB-EC"/>
</dbReference>
<dbReference type="GO" id="GO:0009236">
    <property type="term" value="P:cobalamin biosynthetic process"/>
    <property type="evidence" value="ECO:0007669"/>
    <property type="project" value="UniProtKB-UniPathway"/>
</dbReference>
<dbReference type="GO" id="GO:0032259">
    <property type="term" value="P:methylation"/>
    <property type="evidence" value="ECO:0007669"/>
    <property type="project" value="UniProtKB-KW"/>
</dbReference>
<dbReference type="CDD" id="cd11645">
    <property type="entry name" value="Precorrin_2_C20_MT"/>
    <property type="match status" value="1"/>
</dbReference>
<dbReference type="CDD" id="cd11646">
    <property type="entry name" value="Precorrin_3B_C17_MT"/>
    <property type="match status" value="1"/>
</dbReference>
<dbReference type="FunFam" id="3.40.1010.10:FF:000009">
    <property type="entry name" value="ATP-binding protein"/>
    <property type="match status" value="1"/>
</dbReference>
<dbReference type="FunFam" id="3.30.950.10:FF:000013">
    <property type="entry name" value="Bifunctional S-adenosyl-L-methionine-precorrin-2 methyl transferase/precorrin-3 methylase"/>
    <property type="match status" value="1"/>
</dbReference>
<dbReference type="FunFam" id="3.30.950.10:FF:000014">
    <property type="entry name" value="Bifunctional S-adenosyl-L-methionine-precorrin-2 methyl transferase/precorrin-3 methylase"/>
    <property type="match status" value="1"/>
</dbReference>
<dbReference type="FunFam" id="3.40.1010.10:FF:000010">
    <property type="entry name" value="Cobalamin biosynthesis protein CobIJ"/>
    <property type="match status" value="1"/>
</dbReference>
<dbReference type="Gene3D" id="3.40.1010.10">
    <property type="entry name" value="Cobalt-precorrin-4 Transmethylase, Domain 1"/>
    <property type="match status" value="2"/>
</dbReference>
<dbReference type="Gene3D" id="3.30.950.10">
    <property type="entry name" value="Methyltransferase, Cobalt-precorrin-4 Transmethylase, Domain 2"/>
    <property type="match status" value="2"/>
</dbReference>
<dbReference type="InterPro" id="IPR000878">
    <property type="entry name" value="4pyrrol_Mease"/>
</dbReference>
<dbReference type="InterPro" id="IPR035996">
    <property type="entry name" value="4pyrrol_Methylase_sf"/>
</dbReference>
<dbReference type="InterPro" id="IPR014777">
    <property type="entry name" value="4pyrrole_Mease_sub1"/>
</dbReference>
<dbReference type="InterPro" id="IPR014776">
    <property type="entry name" value="4pyrrole_Mease_sub2"/>
</dbReference>
<dbReference type="InterPro" id="IPR006363">
    <property type="entry name" value="Cbl_synth_CobJ/CibH_dom"/>
</dbReference>
<dbReference type="InterPro" id="IPR012382">
    <property type="entry name" value="CobI/CbiL"/>
</dbReference>
<dbReference type="InterPro" id="IPR006364">
    <property type="entry name" value="CobI/CbiL/CobIJ_dom"/>
</dbReference>
<dbReference type="InterPro" id="IPR051810">
    <property type="entry name" value="Precorrin_MeTrfase"/>
</dbReference>
<dbReference type="InterPro" id="IPR003043">
    <property type="entry name" value="Uropor_MeTrfase_CS"/>
</dbReference>
<dbReference type="NCBIfam" id="TIGR01467">
    <property type="entry name" value="cobI_cbiL"/>
    <property type="match status" value="1"/>
</dbReference>
<dbReference type="NCBIfam" id="TIGR01466">
    <property type="entry name" value="cobJ_cbiH"/>
    <property type="match status" value="1"/>
</dbReference>
<dbReference type="NCBIfam" id="NF004647">
    <property type="entry name" value="PRK05990.1"/>
    <property type="match status" value="1"/>
</dbReference>
<dbReference type="PANTHER" id="PTHR47036">
    <property type="entry name" value="COBALT-FACTOR III C(17)-METHYLTRANSFERASE-RELATED"/>
    <property type="match status" value="1"/>
</dbReference>
<dbReference type="PANTHER" id="PTHR47036:SF1">
    <property type="entry name" value="COBALT-FACTOR III C(17)-METHYLTRANSFERASE-RELATED"/>
    <property type="match status" value="1"/>
</dbReference>
<dbReference type="Pfam" id="PF00590">
    <property type="entry name" value="TP_methylase"/>
    <property type="match status" value="2"/>
</dbReference>
<dbReference type="SUPFAM" id="SSF53790">
    <property type="entry name" value="Tetrapyrrole methylase"/>
    <property type="match status" value="2"/>
</dbReference>
<dbReference type="PROSITE" id="PS00839">
    <property type="entry name" value="SUMT_1"/>
    <property type="match status" value="1"/>
</dbReference>
<dbReference type="PROSITE" id="PS00840">
    <property type="entry name" value="SUMT_2"/>
    <property type="match status" value="1"/>
</dbReference>
<sequence>MSARGTLWGVGLGPGDPELVTVKAARVIGEADVVAYHSAPHGHSIARGIAEPYLRPGQLEEHLVYPVTTEATNHPGGYAGALEDFYADATERIATHLDAGRNVALLAEGDPLFYSSYMHLHTRLTRRFNAVIVPGVTSVSAASAAVATPLVAGDQVLSVLPGTLPVGELTRRLADADAAVVVKLGRSYHNVREALSASGLLGDAFYVERASTAGQRVLPAADVDETSVPYFSLAMLPGGRRRALLTGTVAVVGLGPGDSDWMTPQSRRELAAATDLIGYRGYLDRVEVRDGQRRHPSDNTDEPARARLACSLADQGRAVAVVSSGDPGVFAMATAVLEEAEQWPGVRVRVIPAMTAAQAVASRVGAPLGHDYAVISLSDRLKPWDVIAARLTAAAAADLVLAIYNPASVTRTWQVGAMRELLLAHRDPGIPVVIGRNVSGPVSGPNEDVRVVKLADLNPAEIDMRCLLIVGSSQTRWYSVDSQDRVFTPRRYPEAGRATATKSSRHSD</sequence>
<organism>
    <name type="scientific">Mycobacterium bovis (strain ATCC BAA-935 / AF2122/97)</name>
    <dbReference type="NCBI Taxonomy" id="233413"/>
    <lineage>
        <taxon>Bacteria</taxon>
        <taxon>Bacillati</taxon>
        <taxon>Actinomycetota</taxon>
        <taxon>Actinomycetes</taxon>
        <taxon>Mycobacteriales</taxon>
        <taxon>Mycobacteriaceae</taxon>
        <taxon>Mycobacterium</taxon>
        <taxon>Mycobacterium tuberculosis complex</taxon>
    </lineage>
</organism>
<evidence type="ECO:0000250" key="1"/>
<evidence type="ECO:0000256" key="2">
    <source>
        <dbReference type="SAM" id="MobiDB-lite"/>
    </source>
</evidence>
<evidence type="ECO:0000305" key="3"/>
<proteinExistence type="inferred from homology"/>